<comment type="function">
    <text evidence="2">Cell wall formation.</text>
</comment>
<comment type="catalytic activity">
    <reaction evidence="2">
        <text>2 D-alanine + ATP = D-alanyl-D-alanine + ADP + phosphate + H(+)</text>
        <dbReference type="Rhea" id="RHEA:11224"/>
        <dbReference type="ChEBI" id="CHEBI:15378"/>
        <dbReference type="ChEBI" id="CHEBI:30616"/>
        <dbReference type="ChEBI" id="CHEBI:43474"/>
        <dbReference type="ChEBI" id="CHEBI:57416"/>
        <dbReference type="ChEBI" id="CHEBI:57822"/>
        <dbReference type="ChEBI" id="CHEBI:456216"/>
        <dbReference type="EC" id="6.3.2.4"/>
    </reaction>
</comment>
<comment type="cofactor">
    <cofactor evidence="1">
        <name>Mg(2+)</name>
        <dbReference type="ChEBI" id="CHEBI:18420"/>
    </cofactor>
    <cofactor evidence="1">
        <name>Mn(2+)</name>
        <dbReference type="ChEBI" id="CHEBI:29035"/>
    </cofactor>
    <text evidence="1">Binds 2 magnesium or manganese ions per subunit.</text>
</comment>
<comment type="pathway">
    <text evidence="2">Cell wall biogenesis; peptidoglycan biosynthesis.</text>
</comment>
<comment type="subcellular location">
    <subcellularLocation>
        <location evidence="2">Cytoplasm</location>
    </subcellularLocation>
</comment>
<comment type="similarity">
    <text evidence="2">Belongs to the D-alanine--D-alanine ligase family.</text>
</comment>
<organism>
    <name type="scientific">Photorhabdus laumondii subsp. laumondii (strain DSM 15139 / CIP 105565 / TT01)</name>
    <name type="common">Photorhabdus luminescens subsp. laumondii</name>
    <dbReference type="NCBI Taxonomy" id="243265"/>
    <lineage>
        <taxon>Bacteria</taxon>
        <taxon>Pseudomonadati</taxon>
        <taxon>Pseudomonadota</taxon>
        <taxon>Gammaproteobacteria</taxon>
        <taxon>Enterobacterales</taxon>
        <taxon>Morganellaceae</taxon>
        <taxon>Photorhabdus</taxon>
    </lineage>
</organism>
<evidence type="ECO:0000250" key="1"/>
<evidence type="ECO:0000255" key="2">
    <source>
        <dbReference type="HAMAP-Rule" id="MF_00047"/>
    </source>
</evidence>
<gene>
    <name evidence="2" type="primary">ddl</name>
    <name type="ordered locus">plu3652</name>
</gene>
<proteinExistence type="inferred from homology"/>
<keyword id="KW-0067">ATP-binding</keyword>
<keyword id="KW-0133">Cell shape</keyword>
<keyword id="KW-0961">Cell wall biogenesis/degradation</keyword>
<keyword id="KW-0963">Cytoplasm</keyword>
<keyword id="KW-0436">Ligase</keyword>
<keyword id="KW-0460">Magnesium</keyword>
<keyword id="KW-0464">Manganese</keyword>
<keyword id="KW-0479">Metal-binding</keyword>
<keyword id="KW-0547">Nucleotide-binding</keyword>
<keyword id="KW-0573">Peptidoglycan synthesis</keyword>
<keyword id="KW-1185">Reference proteome</keyword>
<name>DDL_PHOLL</name>
<sequence length="306" mass="33173">MAEKVAVLLGGTSAEREVSLLSGQAVLAGLREAGIDAHPVDTKDFPVTQLKEAGFEKVFIALHGRGGEDGTLQGVLEFLQLPYTGSGVMASALSMDKLRTKQVWQGIGLTVSPYVSINSQQVERLTDSQLQEYVADLGLPLIVKPSLEGSSVGMTKVNEISELRGALEAAFRYDVDLLVEKWLHGPEYTVAILGDTALPSIRIQPAAVFYDYDAKYWSEETQYFCPSGLSDEKEQQLAELALKAYQSVGCSGWGRVDVMMDTDGDFYLLEVNTSPGMTSHSLVPMAARQAGLSFSQLVVKILELAD</sequence>
<protein>
    <recommendedName>
        <fullName evidence="2">D-alanine--D-alanine ligase</fullName>
        <ecNumber evidence="2">6.3.2.4</ecNumber>
    </recommendedName>
    <alternativeName>
        <fullName evidence="2">D-Ala-D-Ala ligase</fullName>
    </alternativeName>
    <alternativeName>
        <fullName evidence="2">D-alanylalanine synthetase</fullName>
    </alternativeName>
</protein>
<reference key="1">
    <citation type="journal article" date="2003" name="Nat. Biotechnol.">
        <title>The genome sequence of the entomopathogenic bacterium Photorhabdus luminescens.</title>
        <authorList>
            <person name="Duchaud E."/>
            <person name="Rusniok C."/>
            <person name="Frangeul L."/>
            <person name="Buchrieser C."/>
            <person name="Givaudan A."/>
            <person name="Taourit S."/>
            <person name="Bocs S."/>
            <person name="Boursaux-Eude C."/>
            <person name="Chandler M."/>
            <person name="Charles J.-F."/>
            <person name="Dassa E."/>
            <person name="Derose R."/>
            <person name="Derzelle S."/>
            <person name="Freyssinet G."/>
            <person name="Gaudriault S."/>
            <person name="Medigue C."/>
            <person name="Lanois A."/>
            <person name="Powell K."/>
            <person name="Siguier P."/>
            <person name="Vincent R."/>
            <person name="Wingate V."/>
            <person name="Zouine M."/>
            <person name="Glaser P."/>
            <person name="Boemare N."/>
            <person name="Danchin A."/>
            <person name="Kunst F."/>
        </authorList>
    </citation>
    <scope>NUCLEOTIDE SEQUENCE [LARGE SCALE GENOMIC DNA]</scope>
    <source>
        <strain>DSM 15139 / CIP 105565 / TT01</strain>
    </source>
</reference>
<accession>Q7N149</accession>
<feature type="chain" id="PRO_0000177850" description="D-alanine--D-alanine ligase">
    <location>
        <begin position="1"/>
        <end position="306"/>
    </location>
</feature>
<feature type="domain" description="ATP-grasp" evidence="2">
    <location>
        <begin position="101"/>
        <end position="303"/>
    </location>
</feature>
<feature type="binding site" evidence="2">
    <location>
        <begin position="134"/>
        <end position="189"/>
    </location>
    <ligand>
        <name>ATP</name>
        <dbReference type="ChEBI" id="CHEBI:30616"/>
    </ligand>
</feature>
<feature type="binding site" evidence="2">
    <location>
        <position position="257"/>
    </location>
    <ligand>
        <name>Mg(2+)</name>
        <dbReference type="ChEBI" id="CHEBI:18420"/>
        <label>1</label>
    </ligand>
</feature>
<feature type="binding site" evidence="2">
    <location>
        <position position="270"/>
    </location>
    <ligand>
        <name>Mg(2+)</name>
        <dbReference type="ChEBI" id="CHEBI:18420"/>
        <label>1</label>
    </ligand>
</feature>
<feature type="binding site" evidence="2">
    <location>
        <position position="270"/>
    </location>
    <ligand>
        <name>Mg(2+)</name>
        <dbReference type="ChEBI" id="CHEBI:18420"/>
        <label>2</label>
    </ligand>
</feature>
<feature type="binding site" evidence="2">
    <location>
        <position position="272"/>
    </location>
    <ligand>
        <name>Mg(2+)</name>
        <dbReference type="ChEBI" id="CHEBI:18420"/>
        <label>2</label>
    </ligand>
</feature>
<dbReference type="EC" id="6.3.2.4" evidence="2"/>
<dbReference type="EMBL" id="BX571871">
    <property type="protein sequence ID" value="CAE16025.1"/>
    <property type="molecule type" value="Genomic_DNA"/>
</dbReference>
<dbReference type="RefSeq" id="WP_011147815.1">
    <property type="nucleotide sequence ID" value="NC_005126.1"/>
</dbReference>
<dbReference type="SMR" id="Q7N149"/>
<dbReference type="STRING" id="243265.plu3652"/>
<dbReference type="GeneID" id="48849895"/>
<dbReference type="KEGG" id="plu:plu3652"/>
<dbReference type="eggNOG" id="COG1181">
    <property type="taxonomic scope" value="Bacteria"/>
</dbReference>
<dbReference type="HOGENOM" id="CLU_039268_1_2_6"/>
<dbReference type="OrthoDB" id="9813261at2"/>
<dbReference type="UniPathway" id="UPA00219"/>
<dbReference type="Proteomes" id="UP000002514">
    <property type="component" value="Chromosome"/>
</dbReference>
<dbReference type="GO" id="GO:0005829">
    <property type="term" value="C:cytosol"/>
    <property type="evidence" value="ECO:0007669"/>
    <property type="project" value="TreeGrafter"/>
</dbReference>
<dbReference type="GO" id="GO:0005524">
    <property type="term" value="F:ATP binding"/>
    <property type="evidence" value="ECO:0007669"/>
    <property type="project" value="UniProtKB-KW"/>
</dbReference>
<dbReference type="GO" id="GO:0008716">
    <property type="term" value="F:D-alanine-D-alanine ligase activity"/>
    <property type="evidence" value="ECO:0007669"/>
    <property type="project" value="UniProtKB-UniRule"/>
</dbReference>
<dbReference type="GO" id="GO:0046872">
    <property type="term" value="F:metal ion binding"/>
    <property type="evidence" value="ECO:0007669"/>
    <property type="project" value="UniProtKB-KW"/>
</dbReference>
<dbReference type="GO" id="GO:0071555">
    <property type="term" value="P:cell wall organization"/>
    <property type="evidence" value="ECO:0007669"/>
    <property type="project" value="UniProtKB-KW"/>
</dbReference>
<dbReference type="GO" id="GO:0009252">
    <property type="term" value="P:peptidoglycan biosynthetic process"/>
    <property type="evidence" value="ECO:0007669"/>
    <property type="project" value="UniProtKB-UniRule"/>
</dbReference>
<dbReference type="GO" id="GO:0008360">
    <property type="term" value="P:regulation of cell shape"/>
    <property type="evidence" value="ECO:0007669"/>
    <property type="project" value="UniProtKB-KW"/>
</dbReference>
<dbReference type="FunFam" id="3.30.1490.20:FF:000007">
    <property type="entry name" value="D-alanine--D-alanine ligase"/>
    <property type="match status" value="1"/>
</dbReference>
<dbReference type="FunFam" id="3.30.470.20:FF:000008">
    <property type="entry name" value="D-alanine--D-alanine ligase"/>
    <property type="match status" value="1"/>
</dbReference>
<dbReference type="FunFam" id="3.40.50.20:FF:000013">
    <property type="entry name" value="D-alanine--D-alanine ligase"/>
    <property type="match status" value="1"/>
</dbReference>
<dbReference type="Gene3D" id="3.40.50.20">
    <property type="match status" value="1"/>
</dbReference>
<dbReference type="Gene3D" id="3.30.1490.20">
    <property type="entry name" value="ATP-grasp fold, A domain"/>
    <property type="match status" value="1"/>
</dbReference>
<dbReference type="Gene3D" id="3.30.470.20">
    <property type="entry name" value="ATP-grasp fold, B domain"/>
    <property type="match status" value="1"/>
</dbReference>
<dbReference type="HAMAP" id="MF_00047">
    <property type="entry name" value="Dala_Dala_lig"/>
    <property type="match status" value="1"/>
</dbReference>
<dbReference type="InterPro" id="IPR011761">
    <property type="entry name" value="ATP-grasp"/>
</dbReference>
<dbReference type="InterPro" id="IPR013815">
    <property type="entry name" value="ATP_grasp_subdomain_1"/>
</dbReference>
<dbReference type="InterPro" id="IPR000291">
    <property type="entry name" value="D-Ala_lig_Van_CS"/>
</dbReference>
<dbReference type="InterPro" id="IPR005905">
    <property type="entry name" value="D_ala_D_ala"/>
</dbReference>
<dbReference type="InterPro" id="IPR011095">
    <property type="entry name" value="Dala_Dala_lig_C"/>
</dbReference>
<dbReference type="InterPro" id="IPR011127">
    <property type="entry name" value="Dala_Dala_lig_N"/>
</dbReference>
<dbReference type="InterPro" id="IPR016185">
    <property type="entry name" value="PreATP-grasp_dom_sf"/>
</dbReference>
<dbReference type="NCBIfam" id="TIGR01205">
    <property type="entry name" value="D_ala_D_alaTIGR"/>
    <property type="match status" value="1"/>
</dbReference>
<dbReference type="NCBIfam" id="NF002378">
    <property type="entry name" value="PRK01372.1"/>
    <property type="match status" value="1"/>
</dbReference>
<dbReference type="PANTHER" id="PTHR23132">
    <property type="entry name" value="D-ALANINE--D-ALANINE LIGASE"/>
    <property type="match status" value="1"/>
</dbReference>
<dbReference type="PANTHER" id="PTHR23132:SF23">
    <property type="entry name" value="D-ALANINE--D-ALANINE LIGASE B"/>
    <property type="match status" value="1"/>
</dbReference>
<dbReference type="Pfam" id="PF07478">
    <property type="entry name" value="Dala_Dala_lig_C"/>
    <property type="match status" value="1"/>
</dbReference>
<dbReference type="Pfam" id="PF01820">
    <property type="entry name" value="Dala_Dala_lig_N"/>
    <property type="match status" value="1"/>
</dbReference>
<dbReference type="PIRSF" id="PIRSF039102">
    <property type="entry name" value="Ddl/VanB"/>
    <property type="match status" value="1"/>
</dbReference>
<dbReference type="SUPFAM" id="SSF56059">
    <property type="entry name" value="Glutathione synthetase ATP-binding domain-like"/>
    <property type="match status" value="1"/>
</dbReference>
<dbReference type="SUPFAM" id="SSF52440">
    <property type="entry name" value="PreATP-grasp domain"/>
    <property type="match status" value="1"/>
</dbReference>
<dbReference type="PROSITE" id="PS50975">
    <property type="entry name" value="ATP_GRASP"/>
    <property type="match status" value="1"/>
</dbReference>
<dbReference type="PROSITE" id="PS00843">
    <property type="entry name" value="DALA_DALA_LIGASE_1"/>
    <property type="match status" value="1"/>
</dbReference>
<dbReference type="PROSITE" id="PS00844">
    <property type="entry name" value="DALA_DALA_LIGASE_2"/>
    <property type="match status" value="1"/>
</dbReference>